<evidence type="ECO:0000250" key="1"/>
<evidence type="ECO:0000255" key="2"/>
<evidence type="ECO:0000305" key="3"/>
<evidence type="ECO:0007829" key="4">
    <source>
        <dbReference type="PDB" id="8QSZ"/>
    </source>
</evidence>
<sequence>MNHPTSTGGTAFNPPRPATMIYLCADCGARNTIQAKEVIRCRECGHRVMYKMRTKRMVQFEAR</sequence>
<protein>
    <recommendedName>
        <fullName>DNA-directed RNA polymerases I, II, and III subunit RPABC4</fullName>
        <shortName>RNA polymerases I, II, and III subunit ABC4</shortName>
    </recommendedName>
    <alternativeName>
        <fullName>ABC10-alpha</fullName>
    </alternativeName>
</protein>
<proteinExistence type="evidence at protein level"/>
<accession>P48011</accession>
<accession>O14457</accession>
<gene>
    <name type="primary">rpc10</name>
    <name type="synonym">rpb12</name>
    <name type="ORF">SPBC19C2.03</name>
</gene>
<feature type="chain" id="PRO_0000159752" description="DNA-directed RNA polymerases I, II, and III subunit RPABC4">
    <location>
        <begin position="1"/>
        <end position="63"/>
    </location>
</feature>
<feature type="zinc finger region" description="C4-type" evidence="2">
    <location>
        <begin position="24"/>
        <end position="44"/>
    </location>
</feature>
<feature type="binding site" evidence="1">
    <location>
        <position position="24"/>
    </location>
    <ligand>
        <name>Zn(2+)</name>
        <dbReference type="ChEBI" id="CHEBI:29105"/>
    </ligand>
</feature>
<feature type="binding site" evidence="1">
    <location>
        <position position="27"/>
    </location>
    <ligand>
        <name>Zn(2+)</name>
        <dbReference type="ChEBI" id="CHEBI:29105"/>
    </ligand>
</feature>
<feature type="binding site" evidence="1">
    <location>
        <position position="41"/>
    </location>
    <ligand>
        <name>Zn(2+)</name>
        <dbReference type="ChEBI" id="CHEBI:29105"/>
    </ligand>
</feature>
<feature type="binding site" evidence="1">
    <location>
        <position position="44"/>
    </location>
    <ligand>
        <name>Zn(2+)</name>
        <dbReference type="ChEBI" id="CHEBI:29105"/>
    </ligand>
</feature>
<feature type="sequence conflict" description="In Ref. 1 and 2." evidence="3" ref="1 2">
    <original>A</original>
    <variation>R</variation>
    <location>
        <position position="29"/>
    </location>
</feature>
<feature type="strand" evidence="4">
    <location>
        <begin position="20"/>
        <end position="24"/>
    </location>
</feature>
<feature type="turn" evidence="4">
    <location>
        <begin position="25"/>
        <end position="27"/>
    </location>
</feature>
<feature type="strand" evidence="4">
    <location>
        <begin position="30"/>
        <end position="33"/>
    </location>
</feature>
<feature type="turn" evidence="4">
    <location>
        <begin position="42"/>
        <end position="44"/>
    </location>
</feature>
<feature type="strand" evidence="4">
    <location>
        <begin position="47"/>
        <end position="50"/>
    </location>
</feature>
<feature type="strand" evidence="4">
    <location>
        <begin position="59"/>
        <end position="61"/>
    </location>
</feature>
<keyword id="KW-0002">3D-structure</keyword>
<keyword id="KW-0240">DNA-directed RNA polymerase</keyword>
<keyword id="KW-0479">Metal-binding</keyword>
<keyword id="KW-0539">Nucleus</keyword>
<keyword id="KW-1185">Reference proteome</keyword>
<keyword id="KW-0804">Transcription</keyword>
<keyword id="KW-0862">Zinc</keyword>
<keyword id="KW-0863">Zinc-finger</keyword>
<comment type="function">
    <text>DNA-dependent RNA polymerase catalyzes the transcription of DNA into RNA using the four ribonucleoside triphosphates as substrates. Common component of RNA polymerases I, II and III which synthesize ribosomal RNA precursors, mRNA precursors and many functional non-coding RNAs, and a small RNAs, such as 5S rRNA and tRNAs, respectively.</text>
</comment>
<comment type="subunit">
    <text evidence="1">Component of the RNA polymerase I (Pol I), RNA polymerase II (Pol II) and RNA polymerase III (Pol III) complexes consisting of 14, 12 and 17 subunits, respectively.</text>
</comment>
<comment type="subcellular location">
    <subcellularLocation>
        <location evidence="1">Nucleus</location>
    </subcellularLocation>
</comment>
<comment type="similarity">
    <text evidence="3">Belongs to the archaeal Rpo12/eukaryotic RPC10 RNA polymerase subunit family.</text>
</comment>
<name>RPAB4_SCHPO</name>
<organism>
    <name type="scientific">Schizosaccharomyces pombe (strain 972 / ATCC 24843)</name>
    <name type="common">Fission yeast</name>
    <dbReference type="NCBI Taxonomy" id="284812"/>
    <lineage>
        <taxon>Eukaryota</taxon>
        <taxon>Fungi</taxon>
        <taxon>Dikarya</taxon>
        <taxon>Ascomycota</taxon>
        <taxon>Taphrinomycotina</taxon>
        <taxon>Schizosaccharomycetes</taxon>
        <taxon>Schizosaccharomycetales</taxon>
        <taxon>Schizosaccharomycetaceae</taxon>
        <taxon>Schizosaccharomyces</taxon>
    </lineage>
</organism>
<dbReference type="EMBL" id="U20867">
    <property type="protein sequence ID" value="AAA80487.1"/>
    <property type="molecule type" value="mRNA"/>
</dbReference>
<dbReference type="EMBL" id="U80217">
    <property type="protein sequence ID" value="AAC49841.1"/>
    <property type="molecule type" value="mRNA"/>
</dbReference>
<dbReference type="EMBL" id="AF027819">
    <property type="protein sequence ID" value="AAC16896.1"/>
    <property type="molecule type" value="Genomic_DNA"/>
</dbReference>
<dbReference type="EMBL" id="D89634">
    <property type="protein sequence ID" value="BAA22807.1"/>
    <property type="molecule type" value="Genomic_DNA"/>
</dbReference>
<dbReference type="EMBL" id="CU329671">
    <property type="protein sequence ID" value="CAB52030.1"/>
    <property type="molecule type" value="Genomic_DNA"/>
</dbReference>
<dbReference type="PIR" id="T43546">
    <property type="entry name" value="T43546"/>
</dbReference>
<dbReference type="PIR" id="T52536">
    <property type="entry name" value="T52536"/>
</dbReference>
<dbReference type="RefSeq" id="NP_595688.1">
    <property type="nucleotide sequence ID" value="NM_001021585.2"/>
</dbReference>
<dbReference type="PDB" id="3H0G">
    <property type="method" value="X-ray"/>
    <property type="resolution" value="3.65 A"/>
    <property type="chains" value="L/X=1-63"/>
</dbReference>
<dbReference type="PDB" id="5U0S">
    <property type="method" value="EM"/>
    <property type="resolution" value="7.80 A"/>
    <property type="chains" value="l=1-63"/>
</dbReference>
<dbReference type="PDB" id="7AOC">
    <property type="method" value="EM"/>
    <property type="resolution" value="3.84 A"/>
    <property type="chains" value="L=1-63"/>
</dbReference>
<dbReference type="PDB" id="7AOD">
    <property type="method" value="EM"/>
    <property type="resolution" value="4.50 A"/>
    <property type="chains" value="L/X=1-63"/>
</dbReference>
<dbReference type="PDB" id="7AOE">
    <property type="method" value="EM"/>
    <property type="resolution" value="3.90 A"/>
    <property type="chains" value="L=1-63"/>
</dbReference>
<dbReference type="PDB" id="8QSZ">
    <property type="method" value="EM"/>
    <property type="resolution" value="2.67 A"/>
    <property type="chains" value="L=1-63"/>
</dbReference>
<dbReference type="PDBsum" id="3H0G"/>
<dbReference type="PDBsum" id="5U0S"/>
<dbReference type="PDBsum" id="7AOC"/>
<dbReference type="PDBsum" id="7AOD"/>
<dbReference type="PDBsum" id="7AOE"/>
<dbReference type="PDBsum" id="8QSZ"/>
<dbReference type="EMDB" id="EMD-11840"/>
<dbReference type="EMDB" id="EMD-11841"/>
<dbReference type="EMDB" id="EMD-11842"/>
<dbReference type="EMDB" id="EMD-18643"/>
<dbReference type="EMDB" id="EMD-8480"/>
<dbReference type="SMR" id="P48011"/>
<dbReference type="BioGRID" id="277312">
    <property type="interactions" value="10"/>
</dbReference>
<dbReference type="ComplexPortal" id="CPX-2661">
    <property type="entry name" value="DNA-directed RNA polymerase II complex"/>
</dbReference>
<dbReference type="ComplexPortal" id="CPX-8905">
    <property type="entry name" value="DNA-directed RNA polymerase III complex"/>
</dbReference>
<dbReference type="ComplexPortal" id="CPX-8907">
    <property type="entry name" value="DNA-directed RNA polymerase I complex"/>
</dbReference>
<dbReference type="FunCoup" id="P48011">
    <property type="interactions" value="227"/>
</dbReference>
<dbReference type="IntAct" id="P48011">
    <property type="interactions" value="1"/>
</dbReference>
<dbReference type="STRING" id="284812.P48011"/>
<dbReference type="iPTMnet" id="P48011"/>
<dbReference type="PaxDb" id="4896-SPBC19C2.03.1"/>
<dbReference type="EnsemblFungi" id="SPBC19C2.03.1">
    <property type="protein sequence ID" value="SPBC19C2.03.1:pep"/>
    <property type="gene ID" value="SPBC19C2.03"/>
</dbReference>
<dbReference type="GeneID" id="2540793"/>
<dbReference type="KEGG" id="spo:2540793"/>
<dbReference type="PomBase" id="SPBC19C2.03">
    <property type="gene designation" value="rpc10"/>
</dbReference>
<dbReference type="VEuPathDB" id="FungiDB:SPBC19C2.03"/>
<dbReference type="eggNOG" id="KOG3507">
    <property type="taxonomic scope" value="Eukaryota"/>
</dbReference>
<dbReference type="HOGENOM" id="CLU_179456_0_1_1"/>
<dbReference type="InParanoid" id="P48011"/>
<dbReference type="OMA" id="IYLCADC"/>
<dbReference type="PhylomeDB" id="P48011"/>
<dbReference type="Reactome" id="R-SPO-113418">
    <property type="pathway name" value="Formation of the Early Elongation Complex"/>
</dbReference>
<dbReference type="Reactome" id="R-SPO-5578749">
    <property type="pathway name" value="Transcriptional regulation by small RNAs"/>
</dbReference>
<dbReference type="Reactome" id="R-SPO-674695">
    <property type="pathway name" value="RNA Polymerase II Pre-transcription Events"/>
</dbReference>
<dbReference type="Reactome" id="R-SPO-6781823">
    <property type="pathway name" value="Formation of TC-NER Pre-Incision Complex"/>
</dbReference>
<dbReference type="Reactome" id="R-SPO-6782135">
    <property type="pathway name" value="Dual incision in TC-NER"/>
</dbReference>
<dbReference type="Reactome" id="R-SPO-6782210">
    <property type="pathway name" value="Gap-filling DNA repair synthesis and ligation in TC-NER"/>
</dbReference>
<dbReference type="Reactome" id="R-SPO-6796648">
    <property type="pathway name" value="TP53 Regulates Transcription of DNA Repair Genes"/>
</dbReference>
<dbReference type="Reactome" id="R-SPO-6807505">
    <property type="pathway name" value="RNA polymerase II transcribes snRNA genes"/>
</dbReference>
<dbReference type="Reactome" id="R-SPO-72086">
    <property type="pathway name" value="mRNA Capping"/>
</dbReference>
<dbReference type="Reactome" id="R-SPO-72163">
    <property type="pathway name" value="mRNA Splicing - Major Pathway"/>
</dbReference>
<dbReference type="Reactome" id="R-SPO-72203">
    <property type="pathway name" value="Processing of Capped Intron-Containing Pre-mRNA"/>
</dbReference>
<dbReference type="Reactome" id="R-SPO-73762">
    <property type="pathway name" value="RNA Polymerase I Transcription Initiation"/>
</dbReference>
<dbReference type="Reactome" id="R-SPO-73772">
    <property type="pathway name" value="RNA Polymerase I Promoter Escape"/>
</dbReference>
<dbReference type="Reactome" id="R-SPO-73776">
    <property type="pathway name" value="RNA Polymerase II Promoter Escape"/>
</dbReference>
<dbReference type="Reactome" id="R-SPO-73779">
    <property type="pathway name" value="RNA Polymerase II Transcription Pre-Initiation And Promoter Opening"/>
</dbReference>
<dbReference type="Reactome" id="R-SPO-75953">
    <property type="pathway name" value="RNA Polymerase II Transcription Initiation"/>
</dbReference>
<dbReference type="Reactome" id="R-SPO-76042">
    <property type="pathway name" value="RNA Polymerase II Transcription Initiation And Promoter Clearance"/>
</dbReference>
<dbReference type="Reactome" id="R-SPO-76061">
    <property type="pathway name" value="RNA Polymerase III Transcription Initiation From Type 1 Promoter"/>
</dbReference>
<dbReference type="Reactome" id="R-SPO-76066">
    <property type="pathway name" value="RNA Polymerase III Transcription Initiation From Type 2 Promoter"/>
</dbReference>
<dbReference type="Reactome" id="R-SPO-77075">
    <property type="pathway name" value="RNA Pol II CTD phosphorylation and interaction with CE"/>
</dbReference>
<dbReference type="Reactome" id="R-SPO-9018519">
    <property type="pathway name" value="Estrogen-dependent gene expression"/>
</dbReference>
<dbReference type="EvolutionaryTrace" id="P48011"/>
<dbReference type="PRO" id="PR:P48011"/>
<dbReference type="Proteomes" id="UP000002485">
    <property type="component" value="Chromosome II"/>
</dbReference>
<dbReference type="GO" id="GO:0005829">
    <property type="term" value="C:cytosol"/>
    <property type="evidence" value="ECO:0007005"/>
    <property type="project" value="PomBase"/>
</dbReference>
<dbReference type="GO" id="GO:0005730">
    <property type="term" value="C:nucleolus"/>
    <property type="evidence" value="ECO:0007005"/>
    <property type="project" value="PomBase"/>
</dbReference>
<dbReference type="GO" id="GO:0005634">
    <property type="term" value="C:nucleus"/>
    <property type="evidence" value="ECO:0007005"/>
    <property type="project" value="PomBase"/>
</dbReference>
<dbReference type="GO" id="GO:0005736">
    <property type="term" value="C:RNA polymerase I complex"/>
    <property type="evidence" value="ECO:0000314"/>
    <property type="project" value="PomBase"/>
</dbReference>
<dbReference type="GO" id="GO:0005665">
    <property type="term" value="C:RNA polymerase II, core complex"/>
    <property type="evidence" value="ECO:0000314"/>
    <property type="project" value="PomBase"/>
</dbReference>
<dbReference type="GO" id="GO:0005666">
    <property type="term" value="C:RNA polymerase III complex"/>
    <property type="evidence" value="ECO:0000316"/>
    <property type="project" value="PomBase"/>
</dbReference>
<dbReference type="GO" id="GO:0003677">
    <property type="term" value="F:DNA binding"/>
    <property type="evidence" value="ECO:0007669"/>
    <property type="project" value="InterPro"/>
</dbReference>
<dbReference type="GO" id="GO:0003899">
    <property type="term" value="F:DNA-directed RNA polymerase activity"/>
    <property type="evidence" value="ECO:0007669"/>
    <property type="project" value="InterPro"/>
</dbReference>
<dbReference type="GO" id="GO:0008270">
    <property type="term" value="F:zinc ion binding"/>
    <property type="evidence" value="ECO:0007669"/>
    <property type="project" value="UniProtKB-KW"/>
</dbReference>
<dbReference type="GO" id="GO:0006360">
    <property type="term" value="P:transcription by RNA polymerase I"/>
    <property type="evidence" value="ECO:0000316"/>
    <property type="project" value="PomBase"/>
</dbReference>
<dbReference type="GO" id="GO:0006366">
    <property type="term" value="P:transcription by RNA polymerase II"/>
    <property type="evidence" value="ECO:0000316"/>
    <property type="project" value="PomBase"/>
</dbReference>
<dbReference type="GO" id="GO:0006383">
    <property type="term" value="P:transcription by RNA polymerase III"/>
    <property type="evidence" value="ECO:0000316"/>
    <property type="project" value="PomBase"/>
</dbReference>
<dbReference type="GO" id="GO:0006362">
    <property type="term" value="P:transcription elongation by RNA polymerase I"/>
    <property type="evidence" value="ECO:0000269"/>
    <property type="project" value="PomBase"/>
</dbReference>
<dbReference type="FunFam" id="2.20.28.30:FF:000002">
    <property type="entry name" value="DNA-directed RNA polymerases II, IV and V subunit 12"/>
    <property type="match status" value="1"/>
</dbReference>
<dbReference type="Gene3D" id="2.20.28.30">
    <property type="entry name" value="RNA polymerase ii, chain L"/>
    <property type="match status" value="1"/>
</dbReference>
<dbReference type="InterPro" id="IPR006591">
    <property type="entry name" value="RNAP_P/RPABC4"/>
</dbReference>
<dbReference type="InterPro" id="IPR039747">
    <property type="entry name" value="RPABC4"/>
</dbReference>
<dbReference type="InterPro" id="IPR029040">
    <property type="entry name" value="RPABC4/Spt4"/>
</dbReference>
<dbReference type="PANTHER" id="PTHR12056">
    <property type="entry name" value="DNA-DIRECTED RNA POLYMERASES I, II, AND III"/>
    <property type="match status" value="1"/>
</dbReference>
<dbReference type="PANTHER" id="PTHR12056:SF2">
    <property type="entry name" value="GEO11084P1"/>
    <property type="match status" value="1"/>
</dbReference>
<dbReference type="Pfam" id="PF03604">
    <property type="entry name" value="Zn_ribbon_RPAB4"/>
    <property type="match status" value="1"/>
</dbReference>
<dbReference type="SMART" id="SM00659">
    <property type="entry name" value="RPOLCX"/>
    <property type="match status" value="1"/>
</dbReference>
<dbReference type="SUPFAM" id="SSF63393">
    <property type="entry name" value="RNA polymerase subunits"/>
    <property type="match status" value="1"/>
</dbReference>
<reference key="1">
    <citation type="journal article" date="1995" name="Mol. Cell. Biol.">
        <title>Four subunits that are shared by the three classes of RNA polymerase are functionally interchangeable between Homo sapiens and Saccharomyces cerevisiae.</title>
        <authorList>
            <person name="Shpakovski G.V."/>
            <person name="Acker J."/>
            <person name="Wintzerith M."/>
            <person name="Lacroix J.F."/>
            <person name="Thuriaux P."/>
            <person name="Vigneron M."/>
        </authorList>
    </citation>
    <scope>NUCLEOTIDE SEQUENCE [MRNA]</scope>
    <source>
        <strain>972 / ATCC 24843</strain>
    </source>
</reference>
<reference key="2">
    <citation type="journal article" date="1997" name="Bioorg. Khim.">
        <title>Molecular cloning and characterization of cDNA of the rpc10+ gene encoding the smallest subunit of nuclear RNA polymerases of Schizosaccharomyces pombe.</title>
        <authorList>
            <person name="Shpakovskii G.V."/>
            <person name="Lebedenko E.N."/>
        </authorList>
    </citation>
    <scope>NUCLEOTIDE SEQUENCE [GENOMIC DNA / MRNA]</scope>
    <source>
        <strain>972 / ATCC 24843</strain>
    </source>
</reference>
<reference key="3">
    <citation type="journal article" date="1998" name="Mol. Biol. (Mosk.)">
        <title>Exon-intron organization rpb10+ and rpc10+ genes of Schizosaccharomyces pombe, coding for mini-subunits of nuclear RNA-polymerase I-III.</title>
        <authorList>
            <person name="Shpakovskii G.V."/>
            <person name="Proshkin S.A."/>
            <person name="Lebedenko E.N."/>
        </authorList>
    </citation>
    <scope>NUCLEOTIDE SEQUENCE [GENOMIC DNA]</scope>
    <source>
        <strain>972 / ATCC 24843</strain>
    </source>
</reference>
<reference key="4">
    <citation type="journal article" date="1997" name="Gene">
        <title>Gene organization and protein sequence of the small subunits of Schizosaccharomyces pombe RNA polymerase II.</title>
        <authorList>
            <person name="Sakurai H."/>
            <person name="Ishihama A."/>
        </authorList>
    </citation>
    <scope>NUCLEOTIDE SEQUENCE [GENOMIC DNA]</scope>
    <source>
        <strain>JY741</strain>
    </source>
</reference>
<reference key="5">
    <citation type="journal article" date="2002" name="Nature">
        <title>The genome sequence of Schizosaccharomyces pombe.</title>
        <authorList>
            <person name="Wood V."/>
            <person name="Gwilliam R."/>
            <person name="Rajandream M.A."/>
            <person name="Lyne M.H."/>
            <person name="Lyne R."/>
            <person name="Stewart A."/>
            <person name="Sgouros J.G."/>
            <person name="Peat N."/>
            <person name="Hayles J."/>
            <person name="Baker S.G."/>
            <person name="Basham D."/>
            <person name="Bowman S."/>
            <person name="Brooks K."/>
            <person name="Brown D."/>
            <person name="Brown S."/>
            <person name="Chillingworth T."/>
            <person name="Churcher C.M."/>
            <person name="Collins M."/>
            <person name="Connor R."/>
            <person name="Cronin A."/>
            <person name="Davis P."/>
            <person name="Feltwell T."/>
            <person name="Fraser A."/>
            <person name="Gentles S."/>
            <person name="Goble A."/>
            <person name="Hamlin N."/>
            <person name="Harris D.E."/>
            <person name="Hidalgo J."/>
            <person name="Hodgson G."/>
            <person name="Holroyd S."/>
            <person name="Hornsby T."/>
            <person name="Howarth S."/>
            <person name="Huckle E.J."/>
            <person name="Hunt S."/>
            <person name="Jagels K."/>
            <person name="James K.D."/>
            <person name="Jones L."/>
            <person name="Jones M."/>
            <person name="Leather S."/>
            <person name="McDonald S."/>
            <person name="McLean J."/>
            <person name="Mooney P."/>
            <person name="Moule S."/>
            <person name="Mungall K.L."/>
            <person name="Murphy L.D."/>
            <person name="Niblett D."/>
            <person name="Odell C."/>
            <person name="Oliver K."/>
            <person name="O'Neil S."/>
            <person name="Pearson D."/>
            <person name="Quail M.A."/>
            <person name="Rabbinowitsch E."/>
            <person name="Rutherford K.M."/>
            <person name="Rutter S."/>
            <person name="Saunders D."/>
            <person name="Seeger K."/>
            <person name="Sharp S."/>
            <person name="Skelton J."/>
            <person name="Simmonds M.N."/>
            <person name="Squares R."/>
            <person name="Squares S."/>
            <person name="Stevens K."/>
            <person name="Taylor K."/>
            <person name="Taylor R.G."/>
            <person name="Tivey A."/>
            <person name="Walsh S.V."/>
            <person name="Warren T."/>
            <person name="Whitehead S."/>
            <person name="Woodward J.R."/>
            <person name="Volckaert G."/>
            <person name="Aert R."/>
            <person name="Robben J."/>
            <person name="Grymonprez B."/>
            <person name="Weltjens I."/>
            <person name="Vanstreels E."/>
            <person name="Rieger M."/>
            <person name="Schaefer M."/>
            <person name="Mueller-Auer S."/>
            <person name="Gabel C."/>
            <person name="Fuchs M."/>
            <person name="Duesterhoeft A."/>
            <person name="Fritzc C."/>
            <person name="Holzer E."/>
            <person name="Moestl D."/>
            <person name="Hilbert H."/>
            <person name="Borzym K."/>
            <person name="Langer I."/>
            <person name="Beck A."/>
            <person name="Lehrach H."/>
            <person name="Reinhardt R."/>
            <person name="Pohl T.M."/>
            <person name="Eger P."/>
            <person name="Zimmermann W."/>
            <person name="Wedler H."/>
            <person name="Wambutt R."/>
            <person name="Purnelle B."/>
            <person name="Goffeau A."/>
            <person name="Cadieu E."/>
            <person name="Dreano S."/>
            <person name="Gloux S."/>
            <person name="Lelaure V."/>
            <person name="Mottier S."/>
            <person name="Galibert F."/>
            <person name="Aves S.J."/>
            <person name="Xiang Z."/>
            <person name="Hunt C."/>
            <person name="Moore K."/>
            <person name="Hurst S.M."/>
            <person name="Lucas M."/>
            <person name="Rochet M."/>
            <person name="Gaillardin C."/>
            <person name="Tallada V.A."/>
            <person name="Garzon A."/>
            <person name="Thode G."/>
            <person name="Daga R.R."/>
            <person name="Cruzado L."/>
            <person name="Jimenez J."/>
            <person name="Sanchez M."/>
            <person name="del Rey F."/>
            <person name="Benito J."/>
            <person name="Dominguez A."/>
            <person name="Revuelta J.L."/>
            <person name="Moreno S."/>
            <person name="Armstrong J."/>
            <person name="Forsburg S.L."/>
            <person name="Cerutti L."/>
            <person name="Lowe T."/>
            <person name="McCombie W.R."/>
            <person name="Paulsen I."/>
            <person name="Potashkin J."/>
            <person name="Shpakovski G.V."/>
            <person name="Ussery D."/>
            <person name="Barrell B.G."/>
            <person name="Nurse P."/>
        </authorList>
    </citation>
    <scope>NUCLEOTIDE SEQUENCE [LARGE SCALE GENOMIC DNA]</scope>
    <source>
        <strain>972 / ATCC 24843</strain>
    </source>
</reference>